<protein>
    <recommendedName>
        <fullName evidence="4">Fe(II)/2-oxoglutarate-dependent dioxygenase nvfF</fullName>
        <ecNumber evidence="3">1.14.11.-</ecNumber>
    </recommendedName>
    <alternativeName>
        <fullName evidence="4">Novofumigatoninbiosynthesis cluster protein F</fullName>
    </alternativeName>
</protein>
<comment type="function">
    <text evidence="3">Fe(II)/2-oxoglutarate-dependent dioxygenase; part of the gene cluster that mediates the biosynthesis of novofumigatonin, a heavily oxygenated meroterpenoid containing a unique orthoester moiety (PubMed:29968715). The first step of the pathway is the synthesis of 3,5-dimethylorsellinic acid (DMOA) by the polyketide synthase nvfA via condensation of one acetyl-CoA starter unit with 3 malonyl-CoA units and 2 methylations (PubMed:29968715). DMOA is then converted to farnesyl-DMOA by the farnesyltransferase nvfB (PubMed:29968715). Epoxydation by FAD-dependent monooxygenase nvfK, followed by a protonation-initiated cyclization catalyzed by the terpene cyclase nvfL leads to the production of asnavolin H (PubMed:29968715). The short chain dehydrogenase nvfC then as a 3-OH dehydrogenase of asnovolin H to yield chemesin D (PubMed:29968715). There are two branches to synthesize asnovolin A from chemesin D (PubMed:29968715). In one branch, chemesin D undergoes Baeyer-Villiger oxidation by nvfH, methylation by nvfJ, and enoyl reduction by the nvfM D enoylreductase that reduces the double bond between C-5'and C-6', to form respectively asnovolin I, asnovolin K, and asnovolin A (PubMed:29968715). In the other branch, the methylation precedes the Baeyer-Villiger oxidation and the enoyl reduction to yield asnovolin A via the asnovolin J intermediate (PubMed:29968715). Asnovolin A is further converted to fumigatonoid A by the Fe(II)/2-oxoglutarate-dependent dioxygenase nvfI that catalyzes an endoperoxidation reaction (PubMed:29968715). The alpha/beta hydrolase nvfD then acts as an epimerase that converts fumigatonoid A to its C-5' epimer, which then undergoes spontaneous or nvfD-catalyzed lactonization (PubMed:29968715). The following step utilizes the ketoreductase nvfG to produce fumigatonoid B (PubMed:29968715). The dioxygenase nvfE further converts fumigatonoid B into fumigatonoid C (PubMed:29968715). Finally the Fe(II)/2-oxoglutarate-dependent dioxygenase nvfF catalyzes two rounds of oxidation to transform fumigatonoid C into the end product, novofumigatonin A (PubMed:29968715).</text>
</comment>
<comment type="catalytic activity">
    <reaction evidence="3">
        <text>fumigatonoid C + 2-oxoglutarate + O2 = novofumigatonin + succinate + CO2 + H2O</text>
        <dbReference type="Rhea" id="RHEA:67104"/>
        <dbReference type="ChEBI" id="CHEBI:15377"/>
        <dbReference type="ChEBI" id="CHEBI:15379"/>
        <dbReference type="ChEBI" id="CHEBI:16526"/>
        <dbReference type="ChEBI" id="CHEBI:16810"/>
        <dbReference type="ChEBI" id="CHEBI:30031"/>
        <dbReference type="ChEBI" id="CHEBI:156460"/>
        <dbReference type="ChEBI" id="CHEBI:167689"/>
    </reaction>
    <physiologicalReaction direction="left-to-right" evidence="3">
        <dbReference type="Rhea" id="RHEA:67105"/>
    </physiologicalReaction>
</comment>
<comment type="cofactor">
    <cofactor evidence="2">
        <name>Fe cation</name>
        <dbReference type="ChEBI" id="CHEBI:24875"/>
    </cofactor>
</comment>
<comment type="pathway">
    <text evidence="3">Secondary metabolite biosynthesis; terpenoid biosynthesis.</text>
</comment>
<comment type="subunit">
    <text evidence="2">Homodimer.</text>
</comment>
<comment type="disruption phenotype">
    <text evidence="3">Completely abolishes the production of novofumigatonin, but accumulates asnovolin G and asnovolin A.</text>
</comment>
<comment type="similarity">
    <text evidence="5">Belongs to the PhyH family.</text>
</comment>
<keyword id="KW-0223">Dioxygenase</keyword>
<keyword id="KW-0408">Iron</keyword>
<keyword id="KW-0479">Metal-binding</keyword>
<keyword id="KW-0560">Oxidoreductase</keyword>
<keyword id="KW-1185">Reference proteome</keyword>
<dbReference type="EC" id="1.14.11.-" evidence="3"/>
<dbReference type="EMBL" id="MSZS01000014">
    <property type="protein sequence ID" value="PKX88482.1"/>
    <property type="molecule type" value="Genomic_DNA"/>
</dbReference>
<dbReference type="SMR" id="A0A2I1BSZ6"/>
<dbReference type="STRING" id="1392255.A0A2I1BSZ6"/>
<dbReference type="VEuPathDB" id="FungiDB:P174DRAFT_425993"/>
<dbReference type="OMA" id="ANIHIPR"/>
<dbReference type="OrthoDB" id="445007at2759"/>
<dbReference type="UniPathway" id="UPA00213"/>
<dbReference type="Proteomes" id="UP000234474">
    <property type="component" value="Unassembled WGS sequence"/>
</dbReference>
<dbReference type="GO" id="GO:0051213">
    <property type="term" value="F:dioxygenase activity"/>
    <property type="evidence" value="ECO:0007669"/>
    <property type="project" value="UniProtKB-KW"/>
</dbReference>
<dbReference type="GO" id="GO:0046872">
    <property type="term" value="F:metal ion binding"/>
    <property type="evidence" value="ECO:0007669"/>
    <property type="project" value="UniProtKB-KW"/>
</dbReference>
<dbReference type="GO" id="GO:0016491">
    <property type="term" value="F:oxidoreductase activity"/>
    <property type="evidence" value="ECO:0000314"/>
    <property type="project" value="UniProt"/>
</dbReference>
<dbReference type="GO" id="GO:0140782">
    <property type="term" value="P:novofumigatonin biosynthetic process"/>
    <property type="evidence" value="ECO:0000314"/>
    <property type="project" value="GO_Central"/>
</dbReference>
<dbReference type="Gene3D" id="2.60.120.620">
    <property type="entry name" value="q2cbj1_9rhob like domain"/>
    <property type="match status" value="1"/>
</dbReference>
<dbReference type="InterPro" id="IPR008775">
    <property type="entry name" value="Phytyl_CoA_dOase-like"/>
</dbReference>
<dbReference type="PANTHER" id="PTHR20883">
    <property type="entry name" value="PHYTANOYL-COA DIOXYGENASE DOMAIN CONTAINING 1"/>
    <property type="match status" value="1"/>
</dbReference>
<dbReference type="PANTHER" id="PTHR20883:SF15">
    <property type="entry name" value="PHYTANOYL-COA DIOXYGENASE DOMAIN-CONTAINING PROTEIN 1"/>
    <property type="match status" value="1"/>
</dbReference>
<dbReference type="Pfam" id="PF05721">
    <property type="entry name" value="PhyH"/>
    <property type="match status" value="1"/>
</dbReference>
<dbReference type="SUPFAM" id="SSF51197">
    <property type="entry name" value="Clavaminate synthase-like"/>
    <property type="match status" value="1"/>
</dbReference>
<organism>
    <name type="scientific">Aspergillus novofumigatus (strain IBT 16806)</name>
    <dbReference type="NCBI Taxonomy" id="1392255"/>
    <lineage>
        <taxon>Eukaryota</taxon>
        <taxon>Fungi</taxon>
        <taxon>Dikarya</taxon>
        <taxon>Ascomycota</taxon>
        <taxon>Pezizomycotina</taxon>
        <taxon>Eurotiomycetes</taxon>
        <taxon>Eurotiomycetidae</taxon>
        <taxon>Eurotiales</taxon>
        <taxon>Aspergillaceae</taxon>
        <taxon>Aspergillus</taxon>
        <taxon>Aspergillus subgen. Fumigati</taxon>
    </lineage>
</organism>
<gene>
    <name evidence="4" type="primary">nvfF</name>
    <name type="ORF">P174DRAFT_425993</name>
</gene>
<feature type="chain" id="PRO_0000453081" description="Fe(II)/2-oxoglutarate-dependent dioxygenase nvfF">
    <location>
        <begin position="1"/>
        <end position="298"/>
    </location>
</feature>
<feature type="binding site" evidence="1">
    <location>
        <position position="137"/>
    </location>
    <ligand>
        <name>Fe cation</name>
        <dbReference type="ChEBI" id="CHEBI:24875"/>
    </ligand>
</feature>
<feature type="binding site" evidence="1">
    <location>
        <position position="139"/>
    </location>
    <ligand>
        <name>Fe cation</name>
        <dbReference type="ChEBI" id="CHEBI:24875"/>
    </ligand>
</feature>
<feature type="binding site" evidence="1">
    <location>
        <position position="212"/>
    </location>
    <ligand>
        <name>Fe cation</name>
        <dbReference type="ChEBI" id="CHEBI:24875"/>
    </ligand>
</feature>
<accession>A0A2I1BSZ6</accession>
<evidence type="ECO:0000250" key="1">
    <source>
        <dbReference type="UniProtKB" id="O14832"/>
    </source>
</evidence>
<evidence type="ECO:0000250" key="2">
    <source>
        <dbReference type="UniProtKB" id="Q4WAW9"/>
    </source>
</evidence>
<evidence type="ECO:0000269" key="3">
    <source>
    </source>
</evidence>
<evidence type="ECO:0000303" key="4">
    <source>
    </source>
</evidence>
<evidence type="ECO:0000305" key="5"/>
<proteinExistence type="evidence at protein level"/>
<reference key="1">
    <citation type="journal article" date="2018" name="Proc. Natl. Acad. Sci. U.S.A.">
        <title>Linking secondary metabolites to gene clusters through genome sequencing of six diverse Aspergillus species.</title>
        <authorList>
            <person name="Kjaerboelling I."/>
            <person name="Vesth T.C."/>
            <person name="Frisvad J.C."/>
            <person name="Nybo J.L."/>
            <person name="Theobald S."/>
            <person name="Kuo A."/>
            <person name="Bowyer P."/>
            <person name="Matsuda Y."/>
            <person name="Mondo S."/>
            <person name="Lyhne E.K."/>
            <person name="Kogle M.E."/>
            <person name="Clum A."/>
            <person name="Lipzen A."/>
            <person name="Salamov A."/>
            <person name="Ngan C.Y."/>
            <person name="Daum C."/>
            <person name="Chiniquy J."/>
            <person name="Barry K."/>
            <person name="LaButti K."/>
            <person name="Haridas S."/>
            <person name="Simmons B.A."/>
            <person name="Magnuson J.K."/>
            <person name="Mortensen U.H."/>
            <person name="Larsen T.O."/>
            <person name="Grigoriev I.V."/>
            <person name="Baker S.E."/>
            <person name="Andersen M.R."/>
        </authorList>
    </citation>
    <scope>NUCLEOTIDE SEQUENCE [LARGE SCALE GENOMIC DNA]</scope>
    <source>
        <strain>IBT 16806</strain>
    </source>
</reference>
<reference key="2">
    <citation type="journal article" date="2018" name="Nat. Commun.">
        <title>Novofumigatonin biosynthesis involves a non-heme iron-dependent endoperoxide isomerase for orthoester formation.</title>
        <authorList>
            <person name="Matsuda Y."/>
            <person name="Bai T."/>
            <person name="Phippen C.B.W."/>
            <person name="Noedvig C.S."/>
            <person name="Kjaerboelling I."/>
            <person name="Vesth T.C."/>
            <person name="Andersen M.R."/>
            <person name="Mortensen U.H."/>
            <person name="Gotfredsen C.H."/>
            <person name="Abe I."/>
            <person name="Larsen T.O."/>
        </authorList>
    </citation>
    <scope>FUNCTION</scope>
    <scope>DISRUPTION PHENOTYPE</scope>
    <scope>CATALYTIC ACTIVITY</scope>
    <scope>PATHWAY</scope>
</reference>
<sequence>MTVSTPSKPHICRFPPGADPDVINQAFREDGVVILEGFLTPAQVDKVNCEMKPHLAKVRGGNMRYGPMDTSLETTLEPERRRIHNLAGLSETFRQDILNHPLMHELSRRVFSEFGDYWQYAGSVIDCAPGTPDQFLHRDQPAQKLFNVGPDAPEGFINFLTALTDFTKTNGATRFVWGSHRDWIDKSDENHPIVVAEVKAGDSLFFSGKIVHGGSFNGTNDTYRSSVALPIVPCIMTPYEANIHIPRSTVETMTPLAQRMIGWRSACLPDPYAIGTWTLNMNELGEQMGLKSKGYLEN</sequence>
<name>NVFF_ASPN1</name>